<evidence type="ECO:0000255" key="1">
    <source>
        <dbReference type="HAMAP-Rule" id="MF_01587"/>
    </source>
</evidence>
<gene>
    <name evidence="1" type="primary">ligB</name>
    <name type="ordered locus">Ent638_0092</name>
</gene>
<reference key="1">
    <citation type="journal article" date="2010" name="PLoS Genet.">
        <title>Genome sequence of the plant growth promoting endophytic bacterium Enterobacter sp. 638.</title>
        <authorList>
            <person name="Taghavi S."/>
            <person name="van der Lelie D."/>
            <person name="Hoffman A."/>
            <person name="Zhang Y.B."/>
            <person name="Walla M.D."/>
            <person name="Vangronsveld J."/>
            <person name="Newman L."/>
            <person name="Monchy S."/>
        </authorList>
    </citation>
    <scope>NUCLEOTIDE SEQUENCE [LARGE SCALE GENOMIC DNA]</scope>
    <source>
        <strain>638</strain>
    </source>
</reference>
<accession>A4W502</accession>
<protein>
    <recommendedName>
        <fullName evidence="1">DNA ligase B</fullName>
        <ecNumber evidence="1">6.5.1.2</ecNumber>
    </recommendedName>
    <alternativeName>
        <fullName evidence="1">Polydeoxyribonucleotide synthase [NAD(+)] B</fullName>
    </alternativeName>
</protein>
<name>LIGB_ENT38</name>
<comment type="function">
    <text evidence="1">Catalyzes the formation of phosphodiester linkages between 5'-phosphoryl and 3'-hydroxyl groups in double-stranded DNA using NAD as a coenzyme and as the energy source for the reaction.</text>
</comment>
<comment type="catalytic activity">
    <reaction evidence="1">
        <text>NAD(+) + (deoxyribonucleotide)n-3'-hydroxyl + 5'-phospho-(deoxyribonucleotide)m = (deoxyribonucleotide)n+m + AMP + beta-nicotinamide D-nucleotide.</text>
        <dbReference type="EC" id="6.5.1.2"/>
    </reaction>
</comment>
<comment type="similarity">
    <text evidence="1">Belongs to the NAD-dependent DNA ligase family. LigB subfamily.</text>
</comment>
<sequence>MWKWAGVVVMVWSSYGTAICPAWSHAKAEQEIAGLNAQISRWNDAYWQEGKSDVSDEIYDQLNTRLKQWQQCFNHEPATEDIPPANGTLRHPFAHTGVHKVSGKEELRQWMHSRRDLWVQPKVDGVAVTLVYRKGKLVQAISRGDGVKGEDWTARVQAIPSVPLNVKGVLSESVLQGEIFLRCERHIQQQMGGMNARAKVAGMMMRQNNKTVLENLGVFIWAWPDGPQSMPQRLSELTKAGFTLTAQYTRAVSTADEVEKNRKEWLTSSLPFVTDGIVVRSSIEPVGEQWLPGEGDWVVAWKYSPVSQVAEVNAIQFAIGRTGKISVVAVLESIQLDDKRVKRVNLGSVSRWQALDIAPGDQILVSLAGQGIPRVDKVVWRGNDRKKPAPPASQYHSLTCFYASPECLEQFFARLVWLSSKQILNMEGLGDSSWRLLHQTYHFEHIFSWLAVTQEQIEKTSGLNPARRLQLWHRFELARHHPFKKWIKALGIPLPQAAADALSVHSWRQLQDKDAVSWNQLPGIGTEKARKLVEFVHDSQITRLATWLGEQGIDGF</sequence>
<organism>
    <name type="scientific">Enterobacter sp. (strain 638)</name>
    <dbReference type="NCBI Taxonomy" id="399742"/>
    <lineage>
        <taxon>Bacteria</taxon>
        <taxon>Pseudomonadati</taxon>
        <taxon>Pseudomonadota</taxon>
        <taxon>Gammaproteobacteria</taxon>
        <taxon>Enterobacterales</taxon>
        <taxon>Enterobacteriaceae</taxon>
        <taxon>Enterobacter</taxon>
    </lineage>
</organism>
<feature type="chain" id="PRO_0000381947" description="DNA ligase B">
    <location>
        <begin position="1"/>
        <end position="556"/>
    </location>
</feature>
<feature type="active site" description="N6-AMP-lysine intermediate" evidence="1">
    <location>
        <position position="122"/>
    </location>
</feature>
<dbReference type="EC" id="6.5.1.2" evidence="1"/>
<dbReference type="EMBL" id="CP000653">
    <property type="protein sequence ID" value="ABP58782.1"/>
    <property type="molecule type" value="Genomic_DNA"/>
</dbReference>
<dbReference type="RefSeq" id="WP_011915360.1">
    <property type="nucleotide sequence ID" value="NC_009436.1"/>
</dbReference>
<dbReference type="SMR" id="A4W502"/>
<dbReference type="STRING" id="399742.Ent638_0092"/>
<dbReference type="KEGG" id="ent:Ent638_0092"/>
<dbReference type="eggNOG" id="COG0272">
    <property type="taxonomic scope" value="Bacteria"/>
</dbReference>
<dbReference type="HOGENOM" id="CLU_489786_0_0_6"/>
<dbReference type="OrthoDB" id="9759736at2"/>
<dbReference type="Proteomes" id="UP000000230">
    <property type="component" value="Chromosome"/>
</dbReference>
<dbReference type="GO" id="GO:0003911">
    <property type="term" value="F:DNA ligase (NAD+) activity"/>
    <property type="evidence" value="ECO:0007669"/>
    <property type="project" value="UniProtKB-UniRule"/>
</dbReference>
<dbReference type="GO" id="GO:0006281">
    <property type="term" value="P:DNA repair"/>
    <property type="evidence" value="ECO:0007669"/>
    <property type="project" value="UniProtKB-KW"/>
</dbReference>
<dbReference type="GO" id="GO:0006260">
    <property type="term" value="P:DNA replication"/>
    <property type="evidence" value="ECO:0007669"/>
    <property type="project" value="UniProtKB-KW"/>
</dbReference>
<dbReference type="FunFam" id="2.40.50.140:FF:000139">
    <property type="entry name" value="DNA ligase B"/>
    <property type="match status" value="1"/>
</dbReference>
<dbReference type="FunFam" id="3.30.470.30:FF:000007">
    <property type="entry name" value="DNA ligase B"/>
    <property type="match status" value="1"/>
</dbReference>
<dbReference type="Gene3D" id="3.30.470.30">
    <property type="entry name" value="DNA ligase/mRNA capping enzyme"/>
    <property type="match status" value="1"/>
</dbReference>
<dbReference type="Gene3D" id="1.10.287.610">
    <property type="entry name" value="Helix hairpin bin"/>
    <property type="match status" value="1"/>
</dbReference>
<dbReference type="Gene3D" id="2.40.50.140">
    <property type="entry name" value="Nucleic acid-binding proteins"/>
    <property type="match status" value="1"/>
</dbReference>
<dbReference type="HAMAP" id="MF_01587">
    <property type="entry name" value="DNA_ligase_B"/>
    <property type="match status" value="1"/>
</dbReference>
<dbReference type="InterPro" id="IPR001679">
    <property type="entry name" value="DNA_ligase"/>
</dbReference>
<dbReference type="InterPro" id="IPR018239">
    <property type="entry name" value="DNA_ligase_AS"/>
</dbReference>
<dbReference type="InterPro" id="IPR020923">
    <property type="entry name" value="DNA_ligase_B"/>
</dbReference>
<dbReference type="InterPro" id="IPR033136">
    <property type="entry name" value="DNA_ligase_CS"/>
</dbReference>
<dbReference type="InterPro" id="IPR013839">
    <property type="entry name" value="DNAligase_adenylation"/>
</dbReference>
<dbReference type="InterPro" id="IPR013840">
    <property type="entry name" value="DNAligase_N"/>
</dbReference>
<dbReference type="InterPro" id="IPR012340">
    <property type="entry name" value="NA-bd_OB-fold"/>
</dbReference>
<dbReference type="InterPro" id="IPR050326">
    <property type="entry name" value="NAD_dep_DNA_ligaseB"/>
</dbReference>
<dbReference type="InterPro" id="IPR004150">
    <property type="entry name" value="NAD_DNA_ligase_OB"/>
</dbReference>
<dbReference type="InterPro" id="IPR010994">
    <property type="entry name" value="RuvA_2-like"/>
</dbReference>
<dbReference type="NCBIfam" id="NF005987">
    <property type="entry name" value="PRK08097.1"/>
    <property type="match status" value="1"/>
</dbReference>
<dbReference type="PANTHER" id="PTHR47810">
    <property type="entry name" value="DNA LIGASE"/>
    <property type="match status" value="1"/>
</dbReference>
<dbReference type="PANTHER" id="PTHR47810:SF1">
    <property type="entry name" value="DNA LIGASE B"/>
    <property type="match status" value="1"/>
</dbReference>
<dbReference type="Pfam" id="PF01653">
    <property type="entry name" value="DNA_ligase_aden"/>
    <property type="match status" value="1"/>
</dbReference>
<dbReference type="Pfam" id="PF03120">
    <property type="entry name" value="DNA_ligase_OB"/>
    <property type="match status" value="1"/>
</dbReference>
<dbReference type="PIRSF" id="PIRSF001604">
    <property type="entry name" value="LigA"/>
    <property type="match status" value="1"/>
</dbReference>
<dbReference type="SMART" id="SM00532">
    <property type="entry name" value="LIGANc"/>
    <property type="match status" value="1"/>
</dbReference>
<dbReference type="SUPFAM" id="SSF56091">
    <property type="entry name" value="DNA ligase/mRNA capping enzyme, catalytic domain"/>
    <property type="match status" value="1"/>
</dbReference>
<dbReference type="SUPFAM" id="SSF50249">
    <property type="entry name" value="Nucleic acid-binding proteins"/>
    <property type="match status" value="1"/>
</dbReference>
<dbReference type="SUPFAM" id="SSF47781">
    <property type="entry name" value="RuvA domain 2-like"/>
    <property type="match status" value="1"/>
</dbReference>
<dbReference type="PROSITE" id="PS01055">
    <property type="entry name" value="DNA_LIGASE_N1"/>
    <property type="match status" value="1"/>
</dbReference>
<dbReference type="PROSITE" id="PS01056">
    <property type="entry name" value="DNA_LIGASE_N2"/>
    <property type="match status" value="1"/>
</dbReference>
<proteinExistence type="inferred from homology"/>
<keyword id="KW-0227">DNA damage</keyword>
<keyword id="KW-0234">DNA repair</keyword>
<keyword id="KW-0235">DNA replication</keyword>
<keyword id="KW-0436">Ligase</keyword>
<keyword id="KW-0520">NAD</keyword>